<dbReference type="EMBL" id="AJ006772">
    <property type="protein sequence ID" value="CAA07237.1"/>
    <property type="molecule type" value="mRNA"/>
</dbReference>
<dbReference type="EMBL" id="AJ012568">
    <property type="protein sequence ID" value="CAA10059.1"/>
    <property type="molecule type" value="Genomic_DNA"/>
</dbReference>
<dbReference type="EMBL" id="AE014297">
    <property type="protein sequence ID" value="AAG22169.1"/>
    <property type="molecule type" value="Genomic_DNA"/>
</dbReference>
<dbReference type="EMBL" id="BT003185">
    <property type="protein sequence ID" value="AAO24940.1"/>
    <property type="molecule type" value="mRNA"/>
</dbReference>
<dbReference type="RefSeq" id="NP_001262934.1">
    <property type="nucleotide sequence ID" value="NM_001276005.1"/>
</dbReference>
<dbReference type="RefSeq" id="NP_651303.2">
    <property type="nucleotide sequence ID" value="NM_143046.3"/>
</dbReference>
<dbReference type="SMR" id="Q9I7I0"/>
<dbReference type="BioGRID" id="67895">
    <property type="interactions" value="17"/>
</dbReference>
<dbReference type="DIP" id="DIP-22205N"/>
<dbReference type="FunCoup" id="Q9I7I0">
    <property type="interactions" value="113"/>
</dbReference>
<dbReference type="IntAct" id="Q9I7I0">
    <property type="interactions" value="8"/>
</dbReference>
<dbReference type="MINT" id="Q9I7I0"/>
<dbReference type="STRING" id="7227.FBpp0306645"/>
<dbReference type="iPTMnet" id="Q9I7I0"/>
<dbReference type="PaxDb" id="7227-FBpp0084103"/>
<dbReference type="DNASU" id="42971"/>
<dbReference type="EnsemblMetazoa" id="FBtr0084728">
    <property type="protein sequence ID" value="FBpp0084103"/>
    <property type="gene ID" value="FBgn0015625"/>
</dbReference>
<dbReference type="EnsemblMetazoa" id="FBtr0334578">
    <property type="protein sequence ID" value="FBpp0306645"/>
    <property type="gene ID" value="FBgn0015625"/>
</dbReference>
<dbReference type="GeneID" id="42971"/>
<dbReference type="KEGG" id="dme:Dmel_CG5814"/>
<dbReference type="AGR" id="FB:FBgn0015625"/>
<dbReference type="CTD" id="42971"/>
<dbReference type="FlyBase" id="FBgn0015625">
    <property type="gene designation" value="CycB3"/>
</dbReference>
<dbReference type="VEuPathDB" id="VectorBase:FBgn0015625"/>
<dbReference type="eggNOG" id="KOG0653">
    <property type="taxonomic scope" value="Eukaryota"/>
</dbReference>
<dbReference type="GeneTree" id="ENSGT00940000160459"/>
<dbReference type="HOGENOM" id="CLU_020695_10_5_1"/>
<dbReference type="InParanoid" id="Q9I7I0"/>
<dbReference type="OMA" id="QMPTLTL"/>
<dbReference type="OrthoDB" id="5590282at2759"/>
<dbReference type="PhylomeDB" id="Q9I7I0"/>
<dbReference type="BioGRID-ORCS" id="42971">
    <property type="hits" value="0 hits in 1 CRISPR screen"/>
</dbReference>
<dbReference type="ChiTaRS" id="CycB3">
    <property type="organism name" value="fly"/>
</dbReference>
<dbReference type="GenomeRNAi" id="42971"/>
<dbReference type="PRO" id="PR:Q9I7I0"/>
<dbReference type="Proteomes" id="UP000000803">
    <property type="component" value="Chromosome 3R"/>
</dbReference>
<dbReference type="Bgee" id="FBgn0015625">
    <property type="expression patterns" value="Expressed in egg cell and 68 other cell types or tissues"/>
</dbReference>
<dbReference type="ExpressionAtlas" id="Q9I7I0">
    <property type="expression patterns" value="baseline and differential"/>
</dbReference>
<dbReference type="GO" id="GO:0000307">
    <property type="term" value="C:cyclin-dependent protein kinase holoenzyme complex"/>
    <property type="evidence" value="ECO:0000318"/>
    <property type="project" value="GO_Central"/>
</dbReference>
<dbReference type="GO" id="GO:0005737">
    <property type="term" value="C:cytoplasm"/>
    <property type="evidence" value="ECO:0000318"/>
    <property type="project" value="GO_Central"/>
</dbReference>
<dbReference type="GO" id="GO:0005634">
    <property type="term" value="C:nucleus"/>
    <property type="evidence" value="ECO:0000314"/>
    <property type="project" value="UniProtKB"/>
</dbReference>
<dbReference type="GO" id="GO:0016538">
    <property type="term" value="F:cyclin-dependent protein serine/threonine kinase regulator activity"/>
    <property type="evidence" value="ECO:0000318"/>
    <property type="project" value="GO_Central"/>
</dbReference>
<dbReference type="GO" id="GO:0000082">
    <property type="term" value="P:G1/S transition of mitotic cell cycle"/>
    <property type="evidence" value="ECO:0000318"/>
    <property type="project" value="GO_Central"/>
</dbReference>
<dbReference type="GO" id="GO:0000278">
    <property type="term" value="P:mitotic cell cycle"/>
    <property type="evidence" value="ECO:0000314"/>
    <property type="project" value="UniProtKB"/>
</dbReference>
<dbReference type="GO" id="GO:0000281">
    <property type="term" value="P:mitotic cytokinesis"/>
    <property type="evidence" value="ECO:0000314"/>
    <property type="project" value="UniProtKB"/>
</dbReference>
<dbReference type="GO" id="GO:0035186">
    <property type="term" value="P:syncytial blastoderm mitotic cell cycle"/>
    <property type="evidence" value="ECO:0000316"/>
    <property type="project" value="FlyBase"/>
</dbReference>
<dbReference type="CDD" id="cd20508">
    <property type="entry name" value="CYCLIN_CCNB3_rpt1"/>
    <property type="match status" value="1"/>
</dbReference>
<dbReference type="CDD" id="cd20510">
    <property type="entry name" value="CYCLIN_CCNB3_rpt2"/>
    <property type="match status" value="1"/>
</dbReference>
<dbReference type="FunFam" id="1.10.472.10:FF:000001">
    <property type="entry name" value="G2/mitotic-specific cyclin"/>
    <property type="match status" value="1"/>
</dbReference>
<dbReference type="Gene3D" id="1.10.472.10">
    <property type="entry name" value="Cyclin-like"/>
    <property type="match status" value="2"/>
</dbReference>
<dbReference type="InterPro" id="IPR039361">
    <property type="entry name" value="Cyclin"/>
</dbReference>
<dbReference type="InterPro" id="IPR013763">
    <property type="entry name" value="Cyclin-like_dom"/>
</dbReference>
<dbReference type="InterPro" id="IPR036915">
    <property type="entry name" value="Cyclin-like_sf"/>
</dbReference>
<dbReference type="InterPro" id="IPR046965">
    <property type="entry name" value="Cyclin_A/B-like"/>
</dbReference>
<dbReference type="InterPro" id="IPR004367">
    <property type="entry name" value="Cyclin_C-dom"/>
</dbReference>
<dbReference type="InterPro" id="IPR006671">
    <property type="entry name" value="Cyclin_N"/>
</dbReference>
<dbReference type="PANTHER" id="PTHR10177">
    <property type="entry name" value="CYCLINS"/>
    <property type="match status" value="1"/>
</dbReference>
<dbReference type="Pfam" id="PF02984">
    <property type="entry name" value="Cyclin_C"/>
    <property type="match status" value="1"/>
</dbReference>
<dbReference type="Pfam" id="PF00134">
    <property type="entry name" value="Cyclin_N"/>
    <property type="match status" value="1"/>
</dbReference>
<dbReference type="PIRSF" id="PIRSF001771">
    <property type="entry name" value="Cyclin_A_B_D_E"/>
    <property type="match status" value="1"/>
</dbReference>
<dbReference type="SMART" id="SM00385">
    <property type="entry name" value="CYCLIN"/>
    <property type="match status" value="2"/>
</dbReference>
<dbReference type="SMART" id="SM01332">
    <property type="entry name" value="Cyclin_C"/>
    <property type="match status" value="1"/>
</dbReference>
<dbReference type="SUPFAM" id="SSF47954">
    <property type="entry name" value="Cyclin-like"/>
    <property type="match status" value="2"/>
</dbReference>
<feature type="chain" id="PRO_0000080376" description="G2/mitotic-specific cyclin-B3">
    <location>
        <begin position="1"/>
        <end position="575"/>
    </location>
</feature>
<feature type="short sequence motif" description="D-box" evidence="5">
    <location>
        <begin position="75"/>
        <end position="83"/>
    </location>
</feature>
<feature type="modified residue" description="Phosphoserine" evidence="3">
    <location>
        <position position="215"/>
    </location>
</feature>
<feature type="sequence conflict" description="In Ref. 1; CAA07237." evidence="5" ref="1">
    <original>S</original>
    <variation>P</variation>
    <location>
        <position position="242"/>
    </location>
</feature>
<feature type="sequence conflict" description="In Ref. 1; CAA10059." evidence="5" ref="1">
    <original>G</original>
    <variation>S</variation>
    <location>
        <position position="565"/>
    </location>
</feature>
<gene>
    <name type="primary">CycB3</name>
    <name type="ORF">CG5814</name>
</gene>
<proteinExistence type="evidence at protein level"/>
<protein>
    <recommendedName>
        <fullName>G2/mitotic-specific cyclin-B3</fullName>
    </recommendedName>
</protein>
<comment type="function">
    <text evidence="2 4">Cyclins are positive regulatory subunits of the cyclin-dependent kinases (CDKs), and thereby play an essential role in the control of the cell cycle, notably via their destruction during cell division. Probably functions redundantly with other cyclins in regulation of cell cycle. Its presence may be required to delay a deadline for completing cytokinesis that is ordinary imposed by nuclear envelope reformation. Degradation of CycB and CycB3 promote cytokinesis furrow initiation and ingression. Required with CycB for female fertility.</text>
</comment>
<comment type="subunit">
    <text>Interacts with Cdk1 kinase.</text>
</comment>
<comment type="interaction">
    <interactant intactId="EBI-150964">
        <id>Q9I7I0</id>
    </interactant>
    <interactant intactId="EBI-108689">
        <id>P23572</id>
        <label>Cdk1</label>
    </interactant>
    <organismsDiffer>false</organismsDiffer>
    <experiments>3</experiments>
</comment>
<comment type="subcellular location">
    <subcellularLocation>
        <location evidence="4">Nucleus</location>
    </subcellularLocation>
</comment>
<comment type="tissue specificity">
    <text evidence="4">In embryo, it is expressed in all mitotically proliferating cells, with a high level in neuroblasts. Not expressed in old embryos and thereafter. Not expressed in endoreplicating tissues.</text>
</comment>
<comment type="developmental stage">
    <text evidence="4">Expressed both maternally and zygotically.</text>
</comment>
<comment type="domain">
    <text evidence="1">The N-terminal destruction box (D-box) probably acts as a recognition signal for degradation via the ubiquitin-proteasome pathway.</text>
</comment>
<comment type="PTM">
    <text evidence="5">Ubiquitinated (Probable). Ubiquitination leads to its degradation in early anaphase.</text>
</comment>
<comment type="similarity">
    <text evidence="5">Belongs to the cyclin family. Cyclin AB subfamily.</text>
</comment>
<accession>Q9I7I0</accession>
<accession>O96718</accession>
<accession>Q9TYG8</accession>
<organism>
    <name type="scientific">Drosophila melanogaster</name>
    <name type="common">Fruit fly</name>
    <dbReference type="NCBI Taxonomy" id="7227"/>
    <lineage>
        <taxon>Eukaryota</taxon>
        <taxon>Metazoa</taxon>
        <taxon>Ecdysozoa</taxon>
        <taxon>Arthropoda</taxon>
        <taxon>Hexapoda</taxon>
        <taxon>Insecta</taxon>
        <taxon>Pterygota</taxon>
        <taxon>Neoptera</taxon>
        <taxon>Endopterygota</taxon>
        <taxon>Diptera</taxon>
        <taxon>Brachycera</taxon>
        <taxon>Muscomorpha</taxon>
        <taxon>Ephydroidea</taxon>
        <taxon>Drosophilidae</taxon>
        <taxon>Drosophila</taxon>
        <taxon>Sophophora</taxon>
    </lineage>
</organism>
<name>CCNB3_DROME</name>
<sequence>MAPTKATTRAAITSGHHQLQQAVNPILGALGAATRKGLTRRAAATGNIDPNVENMQTRAKRKADHSPIKNDKIKRSALGNLTNNVKIMTLHPAQDEEQSGVGKKPTAQQLQALMDAKKQENLSVNVFGASKMTTRASSKVEDSVENCHKVLDKLEEALARPKPRPKAVPAAKKTVLGEVQLPAMPNPMQIPVLLPPTHNLAAPQVAAVKPVRRISNDFNKTEDSLYMSALEDVSSCDSMRLSGNFEAARRRSAKLQQKTEQQPQPLLLTLPETAPSQVVPIPPVPEEVEDFDRKNWDDPFQVSHYAMDIFNYLKVREAEFPIADYMPRQIHLTTWMRTLLVDWMVEVQETFELNHETLYLAVKIVDLYLCREVINKEKLQLLGAAAFFIACKYDERQPPLIEDFLYICDGAYNHDELVRMERETLRVIKYDLGIPLSYRFLRRYARCAKVPMPTLTLARYILELSLMDYANISFSDSQMASAALFMALRMHGGPGQLDKQTWTSTLIYYTGYQLADFAEIVTALNAGLHRKPRATIKTIRNKYSHKIFHEVAKVPLLTNQELFQGNLDLNESNLS</sequence>
<reference key="1">
    <citation type="journal article" date="1998" name="Genes Dev.">
        <title>Drosophila Cyclin B3 is required for female fertility and is dispensable for mitosis like Cyclin B.</title>
        <authorList>
            <person name="Jacobs H.W."/>
            <person name="Knoblich J.A."/>
            <person name="Lehner C.F."/>
        </authorList>
    </citation>
    <scope>NUCLEOTIDE SEQUENCE [GENOMIC DNA / MRNA]</scope>
    <scope>FUNCTION</scope>
    <scope>SUBCELLULAR LOCATION</scope>
    <scope>TISSUE SPECIFICITY</scope>
    <scope>DEGRADATION</scope>
    <scope>DEVELOPMENTAL STAGE</scope>
</reference>
<reference key="2">
    <citation type="journal article" date="2000" name="Science">
        <title>The genome sequence of Drosophila melanogaster.</title>
        <authorList>
            <person name="Adams M.D."/>
            <person name="Celniker S.E."/>
            <person name="Holt R.A."/>
            <person name="Evans C.A."/>
            <person name="Gocayne J.D."/>
            <person name="Amanatides P.G."/>
            <person name="Scherer S.E."/>
            <person name="Li P.W."/>
            <person name="Hoskins R.A."/>
            <person name="Galle R.F."/>
            <person name="George R.A."/>
            <person name="Lewis S.E."/>
            <person name="Richards S."/>
            <person name="Ashburner M."/>
            <person name="Henderson S.N."/>
            <person name="Sutton G.G."/>
            <person name="Wortman J.R."/>
            <person name="Yandell M.D."/>
            <person name="Zhang Q."/>
            <person name="Chen L.X."/>
            <person name="Brandon R.C."/>
            <person name="Rogers Y.-H.C."/>
            <person name="Blazej R.G."/>
            <person name="Champe M."/>
            <person name="Pfeiffer B.D."/>
            <person name="Wan K.H."/>
            <person name="Doyle C."/>
            <person name="Baxter E.G."/>
            <person name="Helt G."/>
            <person name="Nelson C.R."/>
            <person name="Miklos G.L.G."/>
            <person name="Abril J.F."/>
            <person name="Agbayani A."/>
            <person name="An H.-J."/>
            <person name="Andrews-Pfannkoch C."/>
            <person name="Baldwin D."/>
            <person name="Ballew R.M."/>
            <person name="Basu A."/>
            <person name="Baxendale J."/>
            <person name="Bayraktaroglu L."/>
            <person name="Beasley E.M."/>
            <person name="Beeson K.Y."/>
            <person name="Benos P.V."/>
            <person name="Berman B.P."/>
            <person name="Bhandari D."/>
            <person name="Bolshakov S."/>
            <person name="Borkova D."/>
            <person name="Botchan M.R."/>
            <person name="Bouck J."/>
            <person name="Brokstein P."/>
            <person name="Brottier P."/>
            <person name="Burtis K.C."/>
            <person name="Busam D.A."/>
            <person name="Butler H."/>
            <person name="Cadieu E."/>
            <person name="Center A."/>
            <person name="Chandra I."/>
            <person name="Cherry J.M."/>
            <person name="Cawley S."/>
            <person name="Dahlke C."/>
            <person name="Davenport L.B."/>
            <person name="Davies P."/>
            <person name="de Pablos B."/>
            <person name="Delcher A."/>
            <person name="Deng Z."/>
            <person name="Mays A.D."/>
            <person name="Dew I."/>
            <person name="Dietz S.M."/>
            <person name="Dodson K."/>
            <person name="Doup L.E."/>
            <person name="Downes M."/>
            <person name="Dugan-Rocha S."/>
            <person name="Dunkov B.C."/>
            <person name="Dunn P."/>
            <person name="Durbin K.J."/>
            <person name="Evangelista C.C."/>
            <person name="Ferraz C."/>
            <person name="Ferriera S."/>
            <person name="Fleischmann W."/>
            <person name="Fosler C."/>
            <person name="Gabrielian A.E."/>
            <person name="Garg N.S."/>
            <person name="Gelbart W.M."/>
            <person name="Glasser K."/>
            <person name="Glodek A."/>
            <person name="Gong F."/>
            <person name="Gorrell J.H."/>
            <person name="Gu Z."/>
            <person name="Guan P."/>
            <person name="Harris M."/>
            <person name="Harris N.L."/>
            <person name="Harvey D.A."/>
            <person name="Heiman T.J."/>
            <person name="Hernandez J.R."/>
            <person name="Houck J."/>
            <person name="Hostin D."/>
            <person name="Houston K.A."/>
            <person name="Howland T.J."/>
            <person name="Wei M.-H."/>
            <person name="Ibegwam C."/>
            <person name="Jalali M."/>
            <person name="Kalush F."/>
            <person name="Karpen G.H."/>
            <person name="Ke Z."/>
            <person name="Kennison J.A."/>
            <person name="Ketchum K.A."/>
            <person name="Kimmel B.E."/>
            <person name="Kodira C.D."/>
            <person name="Kraft C.L."/>
            <person name="Kravitz S."/>
            <person name="Kulp D."/>
            <person name="Lai Z."/>
            <person name="Lasko P."/>
            <person name="Lei Y."/>
            <person name="Levitsky A.A."/>
            <person name="Li J.H."/>
            <person name="Li Z."/>
            <person name="Liang Y."/>
            <person name="Lin X."/>
            <person name="Liu X."/>
            <person name="Mattei B."/>
            <person name="McIntosh T.C."/>
            <person name="McLeod M.P."/>
            <person name="McPherson D."/>
            <person name="Merkulov G."/>
            <person name="Milshina N.V."/>
            <person name="Mobarry C."/>
            <person name="Morris J."/>
            <person name="Moshrefi A."/>
            <person name="Mount S.M."/>
            <person name="Moy M."/>
            <person name="Murphy B."/>
            <person name="Murphy L."/>
            <person name="Muzny D.M."/>
            <person name="Nelson D.L."/>
            <person name="Nelson D.R."/>
            <person name="Nelson K.A."/>
            <person name="Nixon K."/>
            <person name="Nusskern D.R."/>
            <person name="Pacleb J.M."/>
            <person name="Palazzolo M."/>
            <person name="Pittman G.S."/>
            <person name="Pan S."/>
            <person name="Pollard J."/>
            <person name="Puri V."/>
            <person name="Reese M.G."/>
            <person name="Reinert K."/>
            <person name="Remington K."/>
            <person name="Saunders R.D.C."/>
            <person name="Scheeler F."/>
            <person name="Shen H."/>
            <person name="Shue B.C."/>
            <person name="Siden-Kiamos I."/>
            <person name="Simpson M."/>
            <person name="Skupski M.P."/>
            <person name="Smith T.J."/>
            <person name="Spier E."/>
            <person name="Spradling A.C."/>
            <person name="Stapleton M."/>
            <person name="Strong R."/>
            <person name="Sun E."/>
            <person name="Svirskas R."/>
            <person name="Tector C."/>
            <person name="Turner R."/>
            <person name="Venter E."/>
            <person name="Wang A.H."/>
            <person name="Wang X."/>
            <person name="Wang Z.-Y."/>
            <person name="Wassarman D.A."/>
            <person name="Weinstock G.M."/>
            <person name="Weissenbach J."/>
            <person name="Williams S.M."/>
            <person name="Woodage T."/>
            <person name="Worley K.C."/>
            <person name="Wu D."/>
            <person name="Yang S."/>
            <person name="Yao Q.A."/>
            <person name="Ye J."/>
            <person name="Yeh R.-F."/>
            <person name="Zaveri J.S."/>
            <person name="Zhan M."/>
            <person name="Zhang G."/>
            <person name="Zhao Q."/>
            <person name="Zheng L."/>
            <person name="Zheng X.H."/>
            <person name="Zhong F.N."/>
            <person name="Zhong W."/>
            <person name="Zhou X."/>
            <person name="Zhu S.C."/>
            <person name="Zhu X."/>
            <person name="Smith H.O."/>
            <person name="Gibbs R.A."/>
            <person name="Myers E.W."/>
            <person name="Rubin G.M."/>
            <person name="Venter J.C."/>
        </authorList>
    </citation>
    <scope>NUCLEOTIDE SEQUENCE [LARGE SCALE GENOMIC DNA]</scope>
    <source>
        <strain>Berkeley</strain>
    </source>
</reference>
<reference key="3">
    <citation type="journal article" date="2002" name="Genome Biol.">
        <title>Annotation of the Drosophila melanogaster euchromatic genome: a systematic review.</title>
        <authorList>
            <person name="Misra S."/>
            <person name="Crosby M.A."/>
            <person name="Mungall C.J."/>
            <person name="Matthews B.B."/>
            <person name="Campbell K.S."/>
            <person name="Hradecky P."/>
            <person name="Huang Y."/>
            <person name="Kaminker J.S."/>
            <person name="Millburn G.H."/>
            <person name="Prochnik S.E."/>
            <person name="Smith C.D."/>
            <person name="Tupy J.L."/>
            <person name="Whitfield E.J."/>
            <person name="Bayraktaroglu L."/>
            <person name="Berman B.P."/>
            <person name="Bettencourt B.R."/>
            <person name="Celniker S.E."/>
            <person name="de Grey A.D.N.J."/>
            <person name="Drysdale R.A."/>
            <person name="Harris N.L."/>
            <person name="Richter J."/>
            <person name="Russo S."/>
            <person name="Schroeder A.J."/>
            <person name="Shu S.Q."/>
            <person name="Stapleton M."/>
            <person name="Yamada C."/>
            <person name="Ashburner M."/>
            <person name="Gelbart W.M."/>
            <person name="Rubin G.M."/>
            <person name="Lewis S.E."/>
        </authorList>
    </citation>
    <scope>GENOME REANNOTATION</scope>
    <source>
        <strain>Berkeley</strain>
    </source>
</reference>
<reference key="4">
    <citation type="submission" date="2003-01" db="EMBL/GenBank/DDBJ databases">
        <authorList>
            <person name="Stapleton M."/>
            <person name="Brokstein P."/>
            <person name="Hong L."/>
            <person name="Agbayani A."/>
            <person name="Carlson J.W."/>
            <person name="Champe M."/>
            <person name="Chavez C."/>
            <person name="Dorsett V."/>
            <person name="Dresnek D."/>
            <person name="Farfan D."/>
            <person name="Frise E."/>
            <person name="George R.A."/>
            <person name="Gonzalez M."/>
            <person name="Guarin H."/>
            <person name="Kronmiller B."/>
            <person name="Li P.W."/>
            <person name="Liao G."/>
            <person name="Miranda A."/>
            <person name="Mungall C.J."/>
            <person name="Nunoo J."/>
            <person name="Pacleb J.M."/>
            <person name="Paragas V."/>
            <person name="Park S."/>
            <person name="Patel S."/>
            <person name="Phouanenavong S."/>
            <person name="Wan K.H."/>
            <person name="Yu C."/>
            <person name="Lewis S.E."/>
            <person name="Rubin G.M."/>
            <person name="Celniker S.E."/>
        </authorList>
    </citation>
    <scope>NUCLEOTIDE SEQUENCE [LARGE SCALE MRNA]</scope>
    <source>
        <strain>Berkeley</strain>
        <tissue>Embryo</tissue>
    </source>
</reference>
<reference key="5">
    <citation type="journal article" date="1995" name="EMBO J.">
        <title>Exit from mitosis is regulated by Drosophila fizzy and the sequential destruction of cyclins A, B and B3.</title>
        <authorList>
            <person name="Sigrist S."/>
            <person name="Jacobs H."/>
            <person name="Stratmann R."/>
            <person name="Lehner C.F."/>
        </authorList>
    </citation>
    <scope>DEGRADATION</scope>
</reference>
<reference key="6">
    <citation type="journal article" date="2001" name="Curr. Biol.">
        <title>The schedule of destruction of three mitotic cyclins can dictate the timing of events during exit from mitosis.</title>
        <authorList>
            <person name="Parry D.H."/>
            <person name="O'Farrell P.H."/>
        </authorList>
    </citation>
    <scope>DEGRADATION</scope>
</reference>
<reference key="7">
    <citation type="journal article" date="2003" name="Curr. Biol.">
        <title>The degradation of two mitotic cyclins contributes to the timing of cytokinesis.</title>
        <authorList>
            <person name="Echard A."/>
            <person name="O'Farrell P.H."/>
        </authorList>
    </citation>
    <scope>FUNCTION</scope>
</reference>
<reference key="8">
    <citation type="journal article" date="2008" name="J. Proteome Res.">
        <title>Phosphoproteome analysis of Drosophila melanogaster embryos.</title>
        <authorList>
            <person name="Zhai B."/>
            <person name="Villen J."/>
            <person name="Beausoleil S.A."/>
            <person name="Mintseris J."/>
            <person name="Gygi S.P."/>
        </authorList>
    </citation>
    <scope>PHOSPHORYLATION [LARGE SCALE ANALYSIS] AT SER-215</scope>
    <scope>IDENTIFICATION BY MASS SPECTROMETRY</scope>
    <source>
        <tissue>Embryo</tissue>
    </source>
</reference>
<keyword id="KW-0131">Cell cycle</keyword>
<keyword id="KW-0132">Cell division</keyword>
<keyword id="KW-0195">Cyclin</keyword>
<keyword id="KW-0498">Mitosis</keyword>
<keyword id="KW-0539">Nucleus</keyword>
<keyword id="KW-0597">Phosphoprotein</keyword>
<keyword id="KW-1185">Reference proteome</keyword>
<keyword id="KW-0832">Ubl conjugation</keyword>
<evidence type="ECO:0000250" key="1"/>
<evidence type="ECO:0000269" key="2">
    <source>
    </source>
</evidence>
<evidence type="ECO:0000269" key="3">
    <source>
    </source>
</evidence>
<evidence type="ECO:0000269" key="4">
    <source>
    </source>
</evidence>
<evidence type="ECO:0000305" key="5"/>